<comment type="function">
    <text evidence="1 5">Regulation of oxygen dependent gene expression. It modulates the expression of Iso-1 (CYP1) and Iso-2 (CYP3) cytochrome c. In response to heme, promotes transcription of genes encoding functions required for respiration, controlling oxidative damage and repression of anaerobic genes. Binds to the sequence 5'-CGGNNNTNNCGG-3' (By similarity). Is non-functional in terms of iso-1 cytochrome c expression in strain S288c and its derivatives.</text>
</comment>
<comment type="subunit">
    <text evidence="1">Binds DNA as a homodimer. Interacts with SRO9 and YDJ1. In the absence of heme, binds to at least four cellular proteins, including YDJ1 and SRO9, forming a high-molecular-weight complex (HMC) which results in repression of its activity and dictates its DNA-binding specificity (By similarity).</text>
</comment>
<comment type="subcellular location">
    <subcellularLocation>
        <location evidence="3">Nucleus</location>
    </subcellularLocation>
</comment>
<comment type="miscellaneous">
    <text evidence="1">Heme is an effector molecule for CYP1/HAP1. The HRM repeat region mediates heme induction by masking the DNA-binding domain in the absence of inducer (By similarity).</text>
</comment>
<comment type="miscellaneous">
    <text>The sequence for strain S288c and its derivatives differs from other strain backgrounds due to the insertion of a defective Ty1 element in the C-terminus. This acts as a null allele in terms of iso-1 cytochrome c expression and beta-galactosidase activity. Also, the expression levels of ergosterol-related genes and ergosterol content are decreased in laboratory strain X2180 caused by the defective Ty1 insertion. The sequence of a wild-type allele can be found in other strain backgrounds (AC P0CS82).</text>
</comment>
<proteinExistence type="evidence at protein level"/>
<keyword id="KW-0010">Activator</keyword>
<keyword id="KW-0175">Coiled coil</keyword>
<keyword id="KW-0238">DNA-binding</keyword>
<keyword id="KW-0349">Heme</keyword>
<keyword id="KW-0408">Iron</keyword>
<keyword id="KW-0479">Metal-binding</keyword>
<keyword id="KW-0539">Nucleus</keyword>
<keyword id="KW-1185">Reference proteome</keyword>
<keyword id="KW-0677">Repeat</keyword>
<keyword id="KW-0804">Transcription</keyword>
<keyword id="KW-0805">Transcription regulation</keyword>
<keyword id="KW-0862">Zinc</keyword>
<organism>
    <name type="scientific">Saccharomyces cerevisiae (strain ATCC 204508 / S288c)</name>
    <name type="common">Baker's yeast</name>
    <dbReference type="NCBI Taxonomy" id="559292"/>
    <lineage>
        <taxon>Eukaryota</taxon>
        <taxon>Fungi</taxon>
        <taxon>Dikarya</taxon>
        <taxon>Ascomycota</taxon>
        <taxon>Saccharomycotina</taxon>
        <taxon>Saccharomycetes</taxon>
        <taxon>Saccharomycetales</taxon>
        <taxon>Saccharomycetaceae</taxon>
        <taxon>Saccharomyces</taxon>
    </lineage>
</organism>
<accession>P0CE41</accession>
<accession>D6VYQ2</accession>
<accession>P12351</accession>
<accession>Q06574</accession>
<accession>Q6BD21</accession>
<sequence length="1502" mass="166108">MSNTPYNSSVPSIASMTQSSVSRSPNMHTATTPGANTSSNSPPLHMSSDSSKIKRKRNRIPLSCTICRKRKVKCDKLRPHCQQCTKTGVAHLCHYMEQTWAEEAEKELLKDNELKKLRERVKSLEKTLSKVHSSPSSNSLKSYNTPESSNLFMGSDEHTTLVNANTGSASSASHMHQQQQQQQQQEQQQDFSRSANANANSSSLSISNKYDNDELDLTKDFDLLHIKSNGTIHLGATHWLSIMKGDPYLKLLWGHIFAMREKLNEWYYQKNSYSKLKSSKCPINHAQAPPSAAAAATRKCPVDHSAFSSGMVAPKEETPLPRKCPVDHTMFSSGMIPPREDTSSQKRCPVDHTMYSAGMMPPKDETPSPFSTKAMIDHNKHTMNPPQSKCPVDHRNYMKDYPSDMANSSSNPASRCPIDHSSMKNTAALPASTHNTIPHHQPQSGSHARSHPAQSRKHDSYMTESEVLATLCEMLPPKRVIALFIEKFFKHLYPAIPILDEQNFKNHVNQMLSLSSMNPTVNNFGMSMPSSSTLENQPITQINLPKLSDSCNLGILIIILRLTWLSIPSNSCEVDLGEESGSFLVPNESSNMSASALTSMAKEESLLLKHETPVEALELCQKYLIKFDELSSISNNNVNLTTVQFAIFYNFYMKSASNDLTTLTNTNNTGMANPGHDSESHQILLSNITQMAFSCGLHRDPDNFPQLNATIPATSQDVSNNGSKKANPSTNPTLNNNMSAATTNSSSRSGSADSRSGSNPVNKKENQVSIERFKHTWRKIWYYIVSMDVNQSLSLGSPRLLRNLRDFSDTKLPSASRIDYVRDIKELIIVKNFTLFFQIDLCIIAVLNHILNVSLARSVRKFELDSLINLLKNLTYGTENVNDVVSSLINKGLLPTSEGGSVDSNNDEIYGLPKLPDILNHGQHNQNLYADGRNTSSSDIDKKLDLPHESTTRALFFSKHMTIRMLLYLLNYILFTHYEPMGSEDPGTNILAKEYAQEALNFAMDGYRNCMIFFNNIRNTNSLFDYMNVILSYPCLDIGHRSLQFIVCLILRAKCGPLTGMRESSIITNGTSSGFNSSVEDEDVKVKQESSDELKKDDFMKDVNLDSGDSLAEILMSRMLLFQKLTKQLSKKYNYAIRMNKSTGFFVSLLDTPSKKSDSKSGGSSFMLGNWKHPKVSNMSGFLAGDKDQLQKCPVYQDALGFVSPTGANEGSAPMQGMSLQGSTARMGGTQLPPIRSYKPITYTSSNLRRMNETGEAEAKRRRFNDGYIDNNSNNDIPRGISPKPSNGLSSVQPLLSSFSMNQLNGGTIPTVPSLTNITSQMGALPSLDRITTNQINLPDPSRDEAFDNSIKQMTPMTSAFMNANTTIPSSTLNGNMNMNGAGTANTDTSANGSALSTLTSPQGSDLASNSATQYKPDLEDFLMQNSNFNGLMINPSSLVEVVGGYNDPNNLGRNDAVDFLPVDNVEIDGVGIKINYHLLTSIYVTSILSYTVLEDDANDEK</sequence>
<gene>
    <name type="primary">HAP1</name>
    <name type="synonym">CYP1</name>
    <name type="ordered locus">YLR256W</name>
    <name type="ORF">L9672.1</name>
</gene>
<feature type="chain" id="PRO_0000114945" description="Heme-responsive zinc finger transcription factor HAP1">
    <location>
        <begin position="1"/>
        <end position="1502"/>
    </location>
</feature>
<feature type="repeat" description="HRM 1">
    <location>
        <begin position="280"/>
        <end position="285"/>
    </location>
</feature>
<feature type="repeat" description="HRM 2">
    <location>
        <begin position="299"/>
        <end position="304"/>
    </location>
</feature>
<feature type="repeat" description="HRM 3">
    <location>
        <begin position="323"/>
        <end position="328"/>
    </location>
</feature>
<feature type="repeat" description="HRM 4">
    <location>
        <begin position="347"/>
        <end position="352"/>
    </location>
</feature>
<feature type="repeat" description="HRM 5">
    <location>
        <begin position="389"/>
        <end position="394"/>
    </location>
</feature>
<feature type="repeat" description="HRM 6">
    <location>
        <begin position="415"/>
        <end position="420"/>
    </location>
</feature>
<feature type="repeat" description="HRM 7">
    <location>
        <begin position="1192"/>
        <end position="1197"/>
    </location>
</feature>
<feature type="DNA-binding region" description="Zn(2)-C6 fungal-type" evidence="3">
    <location>
        <begin position="64"/>
        <end position="93"/>
    </location>
</feature>
<feature type="region of interest" description="Disordered" evidence="4">
    <location>
        <begin position="1"/>
        <end position="56"/>
    </location>
</feature>
<feature type="region of interest" description="Disordered" evidence="4">
    <location>
        <begin position="126"/>
        <end position="208"/>
    </location>
</feature>
<feature type="region of interest" description="Heme-responsive; required for HMC formation" evidence="1">
    <location>
        <begin position="244"/>
        <end position="444"/>
    </location>
</feature>
<feature type="region of interest" description="Disordered" evidence="4">
    <location>
        <begin position="432"/>
        <end position="458"/>
    </location>
</feature>
<feature type="region of interest" description="Disordered" evidence="4">
    <location>
        <begin position="706"/>
        <end position="767"/>
    </location>
</feature>
<feature type="region of interest" description="Disordered" evidence="4">
    <location>
        <begin position="1384"/>
        <end position="1411"/>
    </location>
</feature>
<feature type="coiled-coil region" evidence="2">
    <location>
        <begin position="105"/>
        <end position="134"/>
    </location>
</feature>
<feature type="compositionally biased region" description="Polar residues" evidence="4">
    <location>
        <begin position="1"/>
        <end position="50"/>
    </location>
</feature>
<feature type="compositionally biased region" description="Low complexity" evidence="4">
    <location>
        <begin position="130"/>
        <end position="142"/>
    </location>
</feature>
<feature type="compositionally biased region" description="Polar residues" evidence="4">
    <location>
        <begin position="143"/>
        <end position="152"/>
    </location>
</feature>
<feature type="compositionally biased region" description="Polar residues" evidence="4">
    <location>
        <begin position="160"/>
        <end position="176"/>
    </location>
</feature>
<feature type="compositionally biased region" description="Low complexity" evidence="4">
    <location>
        <begin position="177"/>
        <end position="208"/>
    </location>
</feature>
<feature type="compositionally biased region" description="Polar residues" evidence="4">
    <location>
        <begin position="432"/>
        <end position="447"/>
    </location>
</feature>
<feature type="compositionally biased region" description="Polar residues" evidence="4">
    <location>
        <begin position="706"/>
        <end position="734"/>
    </location>
</feature>
<feature type="compositionally biased region" description="Low complexity" evidence="4">
    <location>
        <begin position="735"/>
        <end position="759"/>
    </location>
</feature>
<feature type="compositionally biased region" description="Polar residues" evidence="4">
    <location>
        <begin position="1388"/>
        <end position="1411"/>
    </location>
</feature>
<feature type="binding site" evidence="1">
    <location>
        <position position="64"/>
    </location>
    <ligand>
        <name>Zn(2+)</name>
        <dbReference type="ChEBI" id="CHEBI:29105"/>
        <label>1</label>
    </ligand>
</feature>
<feature type="binding site" evidence="1">
    <location>
        <position position="64"/>
    </location>
    <ligand>
        <name>Zn(2+)</name>
        <dbReference type="ChEBI" id="CHEBI:29105"/>
        <label>2</label>
    </ligand>
</feature>
<feature type="binding site" evidence="1">
    <location>
        <position position="67"/>
    </location>
    <ligand>
        <name>Zn(2+)</name>
        <dbReference type="ChEBI" id="CHEBI:29105"/>
        <label>1</label>
    </ligand>
</feature>
<feature type="binding site" evidence="1">
    <location>
        <position position="74"/>
    </location>
    <ligand>
        <name>Zn(2+)</name>
        <dbReference type="ChEBI" id="CHEBI:29105"/>
        <label>1</label>
    </ligand>
</feature>
<feature type="binding site" evidence="1">
    <location>
        <position position="81"/>
    </location>
    <ligand>
        <name>Zn(2+)</name>
        <dbReference type="ChEBI" id="CHEBI:29105"/>
        <label>1</label>
    </ligand>
</feature>
<feature type="binding site" evidence="1">
    <location>
        <position position="81"/>
    </location>
    <ligand>
        <name>Zn(2+)</name>
        <dbReference type="ChEBI" id="CHEBI:29105"/>
        <label>2</label>
    </ligand>
</feature>
<feature type="binding site" evidence="1">
    <location>
        <position position="84"/>
    </location>
    <ligand>
        <name>Zn(2+)</name>
        <dbReference type="ChEBI" id="CHEBI:29105"/>
        <label>2</label>
    </ligand>
</feature>
<feature type="binding site" evidence="1">
    <location>
        <position position="93"/>
    </location>
    <ligand>
        <name>Zn(2+)</name>
        <dbReference type="ChEBI" id="CHEBI:29105"/>
        <label>2</label>
    </ligand>
</feature>
<reference key="1">
    <citation type="journal article" date="1997" name="Nature">
        <title>The nucleotide sequence of Saccharomyces cerevisiae chromosome XII.</title>
        <authorList>
            <person name="Johnston M."/>
            <person name="Hillier L.W."/>
            <person name="Riles L."/>
            <person name="Albermann K."/>
            <person name="Andre B."/>
            <person name="Ansorge W."/>
            <person name="Benes V."/>
            <person name="Brueckner M."/>
            <person name="Delius H."/>
            <person name="Dubois E."/>
            <person name="Duesterhoeft A."/>
            <person name="Entian K.-D."/>
            <person name="Floeth M."/>
            <person name="Goffeau A."/>
            <person name="Hebling U."/>
            <person name="Heumann K."/>
            <person name="Heuss-Neitzel D."/>
            <person name="Hilbert H."/>
            <person name="Hilger F."/>
            <person name="Kleine K."/>
            <person name="Koetter P."/>
            <person name="Louis E.J."/>
            <person name="Messenguy F."/>
            <person name="Mewes H.-W."/>
            <person name="Miosga T."/>
            <person name="Moestl D."/>
            <person name="Mueller-Auer S."/>
            <person name="Nentwich U."/>
            <person name="Obermaier B."/>
            <person name="Piravandi E."/>
            <person name="Pohl T.M."/>
            <person name="Portetelle D."/>
            <person name="Purnelle B."/>
            <person name="Rechmann S."/>
            <person name="Rieger M."/>
            <person name="Rinke M."/>
            <person name="Rose M."/>
            <person name="Scharfe M."/>
            <person name="Scherens B."/>
            <person name="Scholler P."/>
            <person name="Schwager C."/>
            <person name="Schwarz S."/>
            <person name="Underwood A.P."/>
            <person name="Urrestarazu L.A."/>
            <person name="Vandenbol M."/>
            <person name="Verhasselt P."/>
            <person name="Vierendeels F."/>
            <person name="Voet M."/>
            <person name="Volckaert G."/>
            <person name="Voss H."/>
            <person name="Wambutt R."/>
            <person name="Wedler E."/>
            <person name="Wedler H."/>
            <person name="Zimmermann F.K."/>
            <person name="Zollner A."/>
            <person name="Hani J."/>
            <person name="Hoheisel J.D."/>
        </authorList>
    </citation>
    <scope>NUCLEOTIDE SEQUENCE [LARGE SCALE GENOMIC DNA]</scope>
    <source>
        <strain>ATCC 204508 / S288c</strain>
    </source>
</reference>
<reference key="2">
    <citation type="journal article" date="2014" name="G3 (Bethesda)">
        <title>The reference genome sequence of Saccharomyces cerevisiae: Then and now.</title>
        <authorList>
            <person name="Engel S.R."/>
            <person name="Dietrich F.S."/>
            <person name="Fisk D.G."/>
            <person name="Binkley G."/>
            <person name="Balakrishnan R."/>
            <person name="Costanzo M.C."/>
            <person name="Dwight S.S."/>
            <person name="Hitz B.C."/>
            <person name="Karra K."/>
            <person name="Nash R.S."/>
            <person name="Weng S."/>
            <person name="Wong E.D."/>
            <person name="Lloyd P."/>
            <person name="Skrzypek M.S."/>
            <person name="Miyasato S.R."/>
            <person name="Simison M."/>
            <person name="Cherry J.M."/>
        </authorList>
    </citation>
    <scope>GENOME REANNOTATION</scope>
    <source>
        <strain>ATCC 204508 / S288c</strain>
    </source>
</reference>
<reference key="3">
    <citation type="journal article" date="1999" name="Curr. Genet.">
        <title>A 'natural' mutation in Saccharomyces cerevisiae strains derived from S288c affects the complex regulatory gene HAP1 (CYP1).</title>
        <authorList>
            <person name="Gaisne M."/>
            <person name="Becam A.-M."/>
            <person name="Verdiere J."/>
            <person name="Herbert C.J."/>
        </authorList>
    </citation>
    <scope>FUNCTION</scope>
    <scope>IDENTIFICATION OF STRAIN-SPECIFIC DEFECTIVE TY1 INSERTION</scope>
</reference>
<reference key="4">
    <citation type="journal article" date="2008" name="Mol. Cell. Proteomics">
        <title>A multidimensional chromatography technology for in-depth phosphoproteome analysis.</title>
        <authorList>
            <person name="Albuquerque C.P."/>
            <person name="Smolka M.B."/>
            <person name="Payne S.H."/>
            <person name="Bafna V."/>
            <person name="Eng J."/>
            <person name="Zhou H."/>
        </authorList>
    </citation>
    <scope>IDENTIFICATION BY MASS SPECTROMETRY [LARGE SCALE ANALYSIS]</scope>
</reference>
<reference key="5">
    <citation type="journal article" date="2009" name="Science">
        <title>Global analysis of Cdk1 substrate phosphorylation sites provides insights into evolution.</title>
        <authorList>
            <person name="Holt L.J."/>
            <person name="Tuch B.B."/>
            <person name="Villen J."/>
            <person name="Johnson A.D."/>
            <person name="Gygi S.P."/>
            <person name="Morgan D.O."/>
        </authorList>
    </citation>
    <scope>IDENTIFICATION BY MASS SPECTROMETRY [LARGE SCALE ANALYSIS]</scope>
</reference>
<protein>
    <recommendedName>
        <fullName>Heme-responsive zinc finger transcription factor HAP1</fullName>
    </recommendedName>
    <alternativeName>
        <fullName>CYP1 activatory protein</fullName>
    </alternativeName>
    <alternativeName>
        <fullName>Heme activator protein 1</fullName>
    </alternativeName>
</protein>
<name>HAP1_YEAST</name>
<dbReference type="EMBL" id="U20865">
    <property type="protein sequence ID" value="AAB67387.1"/>
    <property type="molecule type" value="Genomic_DNA"/>
</dbReference>
<dbReference type="EMBL" id="BK006945">
    <property type="protein sequence ID" value="DAA09568.1"/>
    <property type="molecule type" value="Genomic_DNA"/>
</dbReference>
<dbReference type="PIR" id="S59400">
    <property type="entry name" value="RGBYH1"/>
</dbReference>
<dbReference type="RefSeq" id="NP_013357.1">
    <property type="nucleotide sequence ID" value="NM_001182143.1"/>
</dbReference>
<dbReference type="SMR" id="P0CE41"/>
<dbReference type="BioGRID" id="31522">
    <property type="interactions" value="74"/>
</dbReference>
<dbReference type="ComplexPortal" id="CPX-1276">
    <property type="entry name" value="HMC complex"/>
</dbReference>
<dbReference type="ComplexPortal" id="CPX-1882">
    <property type="entry name" value="HAP1 transcriptional repressor complex, SSA1 variant"/>
</dbReference>
<dbReference type="ComplexPortal" id="CPX-1883">
    <property type="entry name" value="HAP1 transcriptional repressor complex, SSA2 variant"/>
</dbReference>
<dbReference type="FunCoup" id="P0CE41">
    <property type="interactions" value="802"/>
</dbReference>
<dbReference type="IntAct" id="P0CE41">
    <property type="interactions" value="4"/>
</dbReference>
<dbReference type="MINT" id="P0CE41"/>
<dbReference type="STRING" id="4932.YLR256W"/>
<dbReference type="iPTMnet" id="P0CE41"/>
<dbReference type="PaxDb" id="4932-YLR256W"/>
<dbReference type="PeptideAtlas" id="P0CE41"/>
<dbReference type="EnsemblFungi" id="YLR256W_mRNA">
    <property type="protein sequence ID" value="YLR256W"/>
    <property type="gene ID" value="YLR256W"/>
</dbReference>
<dbReference type="GeneID" id="850958"/>
<dbReference type="KEGG" id="sce:YLR256W"/>
<dbReference type="AGR" id="SGD:S000004246"/>
<dbReference type="SGD" id="S000004246">
    <property type="gene designation" value="HAP1"/>
</dbReference>
<dbReference type="VEuPathDB" id="FungiDB:YLR256W"/>
<dbReference type="eggNOG" id="ENOG502QRPQ">
    <property type="taxonomic scope" value="Eukaryota"/>
</dbReference>
<dbReference type="HOGENOM" id="CLU_004380_0_0_1"/>
<dbReference type="InParanoid" id="P0CE41"/>
<dbReference type="OMA" id="TTRALFF"/>
<dbReference type="OrthoDB" id="4159781at2759"/>
<dbReference type="BioCyc" id="YEAST:G3O-32359-MONOMER"/>
<dbReference type="BioGRID-ORCS" id="850958">
    <property type="hits" value="8 hits in 13 CRISPR screens"/>
</dbReference>
<dbReference type="ChiTaRS" id="HAP1">
    <property type="organism name" value="yeast"/>
</dbReference>
<dbReference type="PRO" id="PR:P0CE41"/>
<dbReference type="Proteomes" id="UP000002311">
    <property type="component" value="Chromosome XII"/>
</dbReference>
<dbReference type="RNAct" id="P0CE41">
    <property type="molecule type" value="protein"/>
</dbReference>
<dbReference type="GO" id="GO:0005739">
    <property type="term" value="C:mitochondrion"/>
    <property type="evidence" value="ECO:0000314"/>
    <property type="project" value="SGD"/>
</dbReference>
<dbReference type="GO" id="GO:0005634">
    <property type="term" value="C:nucleus"/>
    <property type="evidence" value="ECO:0000314"/>
    <property type="project" value="SGD"/>
</dbReference>
<dbReference type="GO" id="GO:0017053">
    <property type="term" value="C:transcription repressor complex"/>
    <property type="evidence" value="ECO:0000303"/>
    <property type="project" value="ComplexPortal"/>
</dbReference>
<dbReference type="GO" id="GO:0001228">
    <property type="term" value="F:DNA-binding transcription activator activity, RNA polymerase II-specific"/>
    <property type="evidence" value="ECO:0000314"/>
    <property type="project" value="SGD"/>
</dbReference>
<dbReference type="GO" id="GO:0000978">
    <property type="term" value="F:RNA polymerase II cis-regulatory region sequence-specific DNA binding"/>
    <property type="evidence" value="ECO:0000314"/>
    <property type="project" value="SGD"/>
</dbReference>
<dbReference type="GO" id="GO:0043565">
    <property type="term" value="F:sequence-specific DNA binding"/>
    <property type="evidence" value="ECO:0007005"/>
    <property type="project" value="SGD"/>
</dbReference>
<dbReference type="GO" id="GO:0008270">
    <property type="term" value="F:zinc ion binding"/>
    <property type="evidence" value="ECO:0007669"/>
    <property type="project" value="InterPro"/>
</dbReference>
<dbReference type="GO" id="GO:0071456">
    <property type="term" value="P:cellular response to hypoxia"/>
    <property type="evidence" value="ECO:0000315"/>
    <property type="project" value="SGD"/>
</dbReference>
<dbReference type="GO" id="GO:0006351">
    <property type="term" value="P:DNA-templated transcription"/>
    <property type="evidence" value="ECO:0007669"/>
    <property type="project" value="InterPro"/>
</dbReference>
<dbReference type="GO" id="GO:0071169">
    <property type="term" value="P:establishment of protein localization to chromatin"/>
    <property type="evidence" value="ECO:0000315"/>
    <property type="project" value="SGD"/>
</dbReference>
<dbReference type="GO" id="GO:0045892">
    <property type="term" value="P:negative regulation of DNA-templated transcription"/>
    <property type="evidence" value="ECO:0000303"/>
    <property type="project" value="ComplexPortal"/>
</dbReference>
<dbReference type="GO" id="GO:0000122">
    <property type="term" value="P:negative regulation of transcription by RNA polymerase II"/>
    <property type="evidence" value="ECO:0000315"/>
    <property type="project" value="SGD"/>
</dbReference>
<dbReference type="GO" id="GO:0045944">
    <property type="term" value="P:positive regulation of transcription by RNA polymerase II"/>
    <property type="evidence" value="ECO:0000315"/>
    <property type="project" value="SGD"/>
</dbReference>
<dbReference type="GO" id="GO:0043457">
    <property type="term" value="P:regulation of cellular respiration"/>
    <property type="evidence" value="ECO:0000315"/>
    <property type="project" value="SGD"/>
</dbReference>
<dbReference type="GO" id="GO:0006357">
    <property type="term" value="P:regulation of transcription by RNA polymerase II"/>
    <property type="evidence" value="ECO:0000318"/>
    <property type="project" value="GO_Central"/>
</dbReference>
<dbReference type="GO" id="GO:0070482">
    <property type="term" value="P:response to oxygen levels"/>
    <property type="evidence" value="ECO:0000303"/>
    <property type="project" value="ComplexPortal"/>
</dbReference>
<dbReference type="CDD" id="cd12148">
    <property type="entry name" value="fungal_TF_MHR"/>
    <property type="match status" value="1"/>
</dbReference>
<dbReference type="CDD" id="cd00067">
    <property type="entry name" value="GAL4"/>
    <property type="match status" value="1"/>
</dbReference>
<dbReference type="CDD" id="cd14655">
    <property type="entry name" value="ZIP_Hap1"/>
    <property type="match status" value="1"/>
</dbReference>
<dbReference type="FunFam" id="4.10.240.10:FF:000014">
    <property type="entry name" value="HAP1p Zinc finger transcription factor"/>
    <property type="match status" value="1"/>
</dbReference>
<dbReference type="Gene3D" id="1.20.5.170">
    <property type="match status" value="1"/>
</dbReference>
<dbReference type="Gene3D" id="4.10.240.10">
    <property type="entry name" value="Zn(2)-C6 fungal-type DNA-binding domain"/>
    <property type="match status" value="1"/>
</dbReference>
<dbReference type="InterPro" id="IPR046347">
    <property type="entry name" value="bZIP_sf"/>
</dbReference>
<dbReference type="InterPro" id="IPR051430">
    <property type="entry name" value="Fungal_TF_Env_Response"/>
</dbReference>
<dbReference type="InterPro" id="IPR007219">
    <property type="entry name" value="Transcription_factor_dom_fun"/>
</dbReference>
<dbReference type="InterPro" id="IPR036864">
    <property type="entry name" value="Zn2-C6_fun-type_DNA-bd_sf"/>
</dbReference>
<dbReference type="InterPro" id="IPR001138">
    <property type="entry name" value="Zn2Cys6_DnaBD"/>
</dbReference>
<dbReference type="PANTHER" id="PTHR31944">
    <property type="entry name" value="HEME-RESPONSIVE ZINC FINGER TRANSCRIPTION FACTOR HAP1"/>
    <property type="match status" value="1"/>
</dbReference>
<dbReference type="PANTHER" id="PTHR31944:SF131">
    <property type="entry name" value="HEME-RESPONSIVE ZINC FINGER TRANSCRIPTION FACTOR HAP1"/>
    <property type="match status" value="1"/>
</dbReference>
<dbReference type="Pfam" id="PF00172">
    <property type="entry name" value="Zn_clus"/>
    <property type="match status" value="1"/>
</dbReference>
<dbReference type="SMART" id="SM00906">
    <property type="entry name" value="Fungal_trans"/>
    <property type="match status" value="1"/>
</dbReference>
<dbReference type="SMART" id="SM00066">
    <property type="entry name" value="GAL4"/>
    <property type="match status" value="1"/>
</dbReference>
<dbReference type="SUPFAM" id="SSF57959">
    <property type="entry name" value="Leucine zipper domain"/>
    <property type="match status" value="1"/>
</dbReference>
<dbReference type="SUPFAM" id="SSF57701">
    <property type="entry name" value="Zn2/Cys6 DNA-binding domain"/>
    <property type="match status" value="1"/>
</dbReference>
<dbReference type="PROSITE" id="PS00463">
    <property type="entry name" value="ZN2_CY6_FUNGAL_1"/>
    <property type="match status" value="1"/>
</dbReference>
<dbReference type="PROSITE" id="PS50048">
    <property type="entry name" value="ZN2_CY6_FUNGAL_2"/>
    <property type="match status" value="1"/>
</dbReference>
<evidence type="ECO:0000250" key="1"/>
<evidence type="ECO:0000255" key="2"/>
<evidence type="ECO:0000255" key="3">
    <source>
        <dbReference type="PROSITE-ProRule" id="PRU00227"/>
    </source>
</evidence>
<evidence type="ECO:0000256" key="4">
    <source>
        <dbReference type="SAM" id="MobiDB-lite"/>
    </source>
</evidence>
<evidence type="ECO:0000269" key="5">
    <source>
    </source>
</evidence>